<evidence type="ECO:0000255" key="1">
    <source>
        <dbReference type="HAMAP-Rule" id="MF_00741"/>
    </source>
</evidence>
<sequence length="347" mass="38869">MDYKTSGVDIKAGREFVSEIKQSVESTYSSNVLEGIGGFGGLFKIPLEGLKKPVLVSGTDGVGTKLELAQIKNFHFEVGIDLVAMCMNDIITTGAKPLFFLDYIATGKLEKNQLLEVINGIAHSCRENKCSILGGETAEMPGFYSKNKYDLAGFCVGIADEEKLINGKKICENDLIIALQSNGMHSNGFSLVRKIIENNNQIDKQFEKKYNLDFYDELLKPTKIYFKIVNQILSQNIQIKGMSHITGGGIPENLPRCMSSDFIPYIDKKSWKIPVLFEFLKDVGQIPEKDFWNTFNLGVGFCLIIDKKYKDKILNICNAFDISSWVLGKVLKKNNSKENNFLPEIII</sequence>
<dbReference type="EC" id="6.3.3.1" evidence="1"/>
<dbReference type="EMBL" id="BX548174">
    <property type="protein sequence ID" value="CAE20048.1"/>
    <property type="molecule type" value="Genomic_DNA"/>
</dbReference>
<dbReference type="RefSeq" id="WP_011133217.1">
    <property type="nucleotide sequence ID" value="NC_005072.1"/>
</dbReference>
<dbReference type="SMR" id="Q7UZR7"/>
<dbReference type="STRING" id="59919.PMM1589"/>
<dbReference type="KEGG" id="pmm:PMM1589"/>
<dbReference type="eggNOG" id="COG0150">
    <property type="taxonomic scope" value="Bacteria"/>
</dbReference>
<dbReference type="HOGENOM" id="CLU_047116_0_0_3"/>
<dbReference type="OrthoDB" id="9802507at2"/>
<dbReference type="UniPathway" id="UPA00074">
    <property type="reaction ID" value="UER00129"/>
</dbReference>
<dbReference type="Proteomes" id="UP000001026">
    <property type="component" value="Chromosome"/>
</dbReference>
<dbReference type="GO" id="GO:0005829">
    <property type="term" value="C:cytosol"/>
    <property type="evidence" value="ECO:0007669"/>
    <property type="project" value="TreeGrafter"/>
</dbReference>
<dbReference type="GO" id="GO:0005524">
    <property type="term" value="F:ATP binding"/>
    <property type="evidence" value="ECO:0007669"/>
    <property type="project" value="UniProtKB-KW"/>
</dbReference>
<dbReference type="GO" id="GO:0004637">
    <property type="term" value="F:phosphoribosylamine-glycine ligase activity"/>
    <property type="evidence" value="ECO:0007669"/>
    <property type="project" value="TreeGrafter"/>
</dbReference>
<dbReference type="GO" id="GO:0004641">
    <property type="term" value="F:phosphoribosylformylglycinamidine cyclo-ligase activity"/>
    <property type="evidence" value="ECO:0007669"/>
    <property type="project" value="UniProtKB-UniRule"/>
</dbReference>
<dbReference type="GO" id="GO:0006189">
    <property type="term" value="P:'de novo' IMP biosynthetic process"/>
    <property type="evidence" value="ECO:0007669"/>
    <property type="project" value="UniProtKB-UniRule"/>
</dbReference>
<dbReference type="GO" id="GO:0046084">
    <property type="term" value="P:adenine biosynthetic process"/>
    <property type="evidence" value="ECO:0007669"/>
    <property type="project" value="TreeGrafter"/>
</dbReference>
<dbReference type="CDD" id="cd02196">
    <property type="entry name" value="PurM"/>
    <property type="match status" value="1"/>
</dbReference>
<dbReference type="FunFam" id="3.30.1330.10:FF:000001">
    <property type="entry name" value="Phosphoribosylformylglycinamidine cyclo-ligase"/>
    <property type="match status" value="1"/>
</dbReference>
<dbReference type="FunFam" id="3.90.650.10:FF:000011">
    <property type="entry name" value="Phosphoribosylformylglycinamidine cyclo-ligase"/>
    <property type="match status" value="1"/>
</dbReference>
<dbReference type="Gene3D" id="3.90.650.10">
    <property type="entry name" value="PurM-like C-terminal domain"/>
    <property type="match status" value="1"/>
</dbReference>
<dbReference type="Gene3D" id="3.30.1330.10">
    <property type="entry name" value="PurM-like, N-terminal domain"/>
    <property type="match status" value="1"/>
</dbReference>
<dbReference type="HAMAP" id="MF_00741">
    <property type="entry name" value="AIRS"/>
    <property type="match status" value="1"/>
</dbReference>
<dbReference type="InterPro" id="IPR010918">
    <property type="entry name" value="PurM-like_C_dom"/>
</dbReference>
<dbReference type="InterPro" id="IPR036676">
    <property type="entry name" value="PurM-like_C_sf"/>
</dbReference>
<dbReference type="InterPro" id="IPR016188">
    <property type="entry name" value="PurM-like_N"/>
</dbReference>
<dbReference type="InterPro" id="IPR036921">
    <property type="entry name" value="PurM-like_N_sf"/>
</dbReference>
<dbReference type="InterPro" id="IPR004733">
    <property type="entry name" value="PurM_cligase"/>
</dbReference>
<dbReference type="NCBIfam" id="TIGR00878">
    <property type="entry name" value="purM"/>
    <property type="match status" value="1"/>
</dbReference>
<dbReference type="PANTHER" id="PTHR10520:SF12">
    <property type="entry name" value="TRIFUNCTIONAL PURINE BIOSYNTHETIC PROTEIN ADENOSINE-3"/>
    <property type="match status" value="1"/>
</dbReference>
<dbReference type="PANTHER" id="PTHR10520">
    <property type="entry name" value="TRIFUNCTIONAL PURINE BIOSYNTHETIC PROTEIN ADENOSINE-3-RELATED"/>
    <property type="match status" value="1"/>
</dbReference>
<dbReference type="Pfam" id="PF00586">
    <property type="entry name" value="AIRS"/>
    <property type="match status" value="1"/>
</dbReference>
<dbReference type="Pfam" id="PF02769">
    <property type="entry name" value="AIRS_C"/>
    <property type="match status" value="1"/>
</dbReference>
<dbReference type="SUPFAM" id="SSF56042">
    <property type="entry name" value="PurM C-terminal domain-like"/>
    <property type="match status" value="1"/>
</dbReference>
<dbReference type="SUPFAM" id="SSF55326">
    <property type="entry name" value="PurM N-terminal domain-like"/>
    <property type="match status" value="1"/>
</dbReference>
<protein>
    <recommendedName>
        <fullName evidence="1">Phosphoribosylformylglycinamidine cyclo-ligase</fullName>
        <ecNumber evidence="1">6.3.3.1</ecNumber>
    </recommendedName>
    <alternativeName>
        <fullName evidence="1">AIR synthase</fullName>
    </alternativeName>
    <alternativeName>
        <fullName evidence="1">AIRS</fullName>
    </alternativeName>
    <alternativeName>
        <fullName evidence="1">Phosphoribosyl-aminoimidazole synthetase</fullName>
    </alternativeName>
</protein>
<accession>Q7UZR7</accession>
<reference key="1">
    <citation type="journal article" date="2003" name="Nature">
        <title>Genome divergence in two Prochlorococcus ecotypes reflects oceanic niche differentiation.</title>
        <authorList>
            <person name="Rocap G."/>
            <person name="Larimer F.W."/>
            <person name="Lamerdin J.E."/>
            <person name="Malfatti S."/>
            <person name="Chain P."/>
            <person name="Ahlgren N.A."/>
            <person name="Arellano A."/>
            <person name="Coleman M."/>
            <person name="Hauser L."/>
            <person name="Hess W.R."/>
            <person name="Johnson Z.I."/>
            <person name="Land M.L."/>
            <person name="Lindell D."/>
            <person name="Post A.F."/>
            <person name="Regala W."/>
            <person name="Shah M."/>
            <person name="Shaw S.L."/>
            <person name="Steglich C."/>
            <person name="Sullivan M.B."/>
            <person name="Ting C.S."/>
            <person name="Tolonen A."/>
            <person name="Webb E.A."/>
            <person name="Zinser E.R."/>
            <person name="Chisholm S.W."/>
        </authorList>
    </citation>
    <scope>NUCLEOTIDE SEQUENCE [LARGE SCALE GENOMIC DNA]</scope>
    <source>
        <strain>CCMP1986 / NIES-2087 / MED4</strain>
    </source>
</reference>
<gene>
    <name evidence="1" type="primary">purM</name>
    <name type="ordered locus">PMM1589</name>
</gene>
<proteinExistence type="inferred from homology"/>
<comment type="catalytic activity">
    <reaction evidence="1">
        <text>2-formamido-N(1)-(5-O-phospho-beta-D-ribosyl)acetamidine + ATP = 5-amino-1-(5-phospho-beta-D-ribosyl)imidazole + ADP + phosphate + H(+)</text>
        <dbReference type="Rhea" id="RHEA:23032"/>
        <dbReference type="ChEBI" id="CHEBI:15378"/>
        <dbReference type="ChEBI" id="CHEBI:30616"/>
        <dbReference type="ChEBI" id="CHEBI:43474"/>
        <dbReference type="ChEBI" id="CHEBI:137981"/>
        <dbReference type="ChEBI" id="CHEBI:147287"/>
        <dbReference type="ChEBI" id="CHEBI:456216"/>
        <dbReference type="EC" id="6.3.3.1"/>
    </reaction>
</comment>
<comment type="pathway">
    <text evidence="1">Purine metabolism; IMP biosynthesis via de novo pathway; 5-amino-1-(5-phospho-D-ribosyl)imidazole from N(2)-formyl-N(1)-(5-phospho-D-ribosyl)glycinamide: step 2/2.</text>
</comment>
<comment type="subcellular location">
    <subcellularLocation>
        <location evidence="1">Cytoplasm</location>
    </subcellularLocation>
</comment>
<comment type="similarity">
    <text evidence="1">Belongs to the AIR synthase family.</text>
</comment>
<feature type="chain" id="PRO_0000148232" description="Phosphoribosylformylglycinamidine cyclo-ligase">
    <location>
        <begin position="1"/>
        <end position="347"/>
    </location>
</feature>
<name>PUR5_PROMP</name>
<keyword id="KW-0067">ATP-binding</keyword>
<keyword id="KW-0963">Cytoplasm</keyword>
<keyword id="KW-0436">Ligase</keyword>
<keyword id="KW-0547">Nucleotide-binding</keyword>
<keyword id="KW-0658">Purine biosynthesis</keyword>
<organism>
    <name type="scientific">Prochlorococcus marinus subsp. pastoris (strain CCMP1986 / NIES-2087 / MED4)</name>
    <dbReference type="NCBI Taxonomy" id="59919"/>
    <lineage>
        <taxon>Bacteria</taxon>
        <taxon>Bacillati</taxon>
        <taxon>Cyanobacteriota</taxon>
        <taxon>Cyanophyceae</taxon>
        <taxon>Synechococcales</taxon>
        <taxon>Prochlorococcaceae</taxon>
        <taxon>Prochlorococcus</taxon>
    </lineage>
</organism>